<reference key="1">
    <citation type="journal article" date="1996" name="J. Biol. Chem.">
        <title>Tmp21 and p24A, two type I proteins enriched in pancreatic microsomal membranes, are members of a protein family involved in vesicular trafficking.</title>
        <authorList>
            <person name="Blum R."/>
            <person name="Feick P."/>
            <person name="Puype M."/>
            <person name="Vandekerckhove J."/>
            <person name="Klengel R."/>
            <person name="Nastainczyk W."/>
            <person name="Schulz I."/>
        </authorList>
    </citation>
    <scope>NUCLEOTIDE SEQUENCE [MRNA]</scope>
    <source>
        <tissue>Brain</tissue>
    </source>
</reference>
<reference key="2">
    <citation type="submission" date="1996-07" db="EMBL/GenBank/DDBJ databases">
        <title>New human gene, member of a large family implicated in protein trafficking.</title>
        <authorList>
            <person name="Sanseau P."/>
            <person name="Sherington R."/>
            <person name="Trower M.K."/>
            <person name="St George-Hyslop P.H."/>
            <person name="Dykes C.W."/>
        </authorList>
    </citation>
    <scope>NUCLEOTIDE SEQUENCE [GENOMIC DNA]</scope>
</reference>
<reference key="3">
    <citation type="journal article" date="1995" name="Nature">
        <title>Cloning of a gene bearing missense mutations in early-onset familial Alzheimer's disease.</title>
        <authorList>
            <person name="Sherrington R."/>
            <person name="Rogaev E.I."/>
            <person name="Liang Y."/>
            <person name="Rogaeva E.A."/>
            <person name="Levesque G."/>
            <person name="Ikeda M."/>
            <person name="Chi H."/>
            <person name="Lin C."/>
            <person name="Li G."/>
            <person name="Holman K."/>
            <person name="Tsuda T."/>
            <person name="Mar L."/>
            <person name="Foncin J.-F."/>
            <person name="Bruni A.C."/>
            <person name="Montesi M.P."/>
            <person name="Sorbi S."/>
            <person name="Rainero I."/>
            <person name="Pinessi L."/>
            <person name="Nee L."/>
            <person name="Chumakov I."/>
            <person name="Pollen D."/>
            <person name="Brookes A."/>
            <person name="Sanseau P."/>
            <person name="Polinsky R.J."/>
            <person name="Wasco W."/>
            <person name="da Silva H.A.R."/>
            <person name="Haines J.L."/>
            <person name="Pericak-Vance M.A."/>
            <person name="Tanzi R.E."/>
            <person name="Roses A.D."/>
            <person name="Fraser P.E."/>
            <person name="Rommens J.M."/>
            <person name="St George-Hyslop P.H."/>
        </authorList>
    </citation>
    <scope>NUCLEOTIDE SEQUENCE [MRNA]</scope>
    <source>
        <tissue>Brain</tissue>
    </source>
</reference>
<reference key="4">
    <citation type="journal article" date="1999" name="DNA Seq.">
        <title>A comparative study of rat and human Tmp21 (p23) reveals the pseudogene-like features of human Tmp21-II.</title>
        <authorList>
            <person name="Hoerer J."/>
            <person name="Blum R."/>
            <person name="Feick P."/>
            <person name="Nastainczyk W."/>
            <person name="Schulz I."/>
        </authorList>
    </citation>
    <scope>NUCLEOTIDE SEQUENCE [MRNA]</scope>
    <source>
        <tissue>Pancreas</tissue>
    </source>
</reference>
<reference key="5">
    <citation type="submission" date="2003-02" db="EMBL/GenBank/DDBJ databases">
        <title>Full-length cDNA libraries and normalization.</title>
        <authorList>
            <person name="Li W.B."/>
            <person name="Gruber C."/>
            <person name="Jessee J."/>
            <person name="Polayes D."/>
        </authorList>
    </citation>
    <scope>NUCLEOTIDE SEQUENCE [LARGE SCALE MRNA]</scope>
    <source>
        <tissue>Fetal brain</tissue>
    </source>
</reference>
<reference key="6">
    <citation type="journal article" date="2004" name="Nat. Genet.">
        <title>Complete sequencing and characterization of 21,243 full-length human cDNAs.</title>
        <authorList>
            <person name="Ota T."/>
            <person name="Suzuki Y."/>
            <person name="Nishikawa T."/>
            <person name="Otsuki T."/>
            <person name="Sugiyama T."/>
            <person name="Irie R."/>
            <person name="Wakamatsu A."/>
            <person name="Hayashi K."/>
            <person name="Sato H."/>
            <person name="Nagai K."/>
            <person name="Kimura K."/>
            <person name="Makita H."/>
            <person name="Sekine M."/>
            <person name="Obayashi M."/>
            <person name="Nishi T."/>
            <person name="Shibahara T."/>
            <person name="Tanaka T."/>
            <person name="Ishii S."/>
            <person name="Yamamoto J."/>
            <person name="Saito K."/>
            <person name="Kawai Y."/>
            <person name="Isono Y."/>
            <person name="Nakamura Y."/>
            <person name="Nagahari K."/>
            <person name="Murakami K."/>
            <person name="Yasuda T."/>
            <person name="Iwayanagi T."/>
            <person name="Wagatsuma M."/>
            <person name="Shiratori A."/>
            <person name="Sudo H."/>
            <person name="Hosoiri T."/>
            <person name="Kaku Y."/>
            <person name="Kodaira H."/>
            <person name="Kondo H."/>
            <person name="Sugawara M."/>
            <person name="Takahashi M."/>
            <person name="Kanda K."/>
            <person name="Yokoi T."/>
            <person name="Furuya T."/>
            <person name="Kikkawa E."/>
            <person name="Omura Y."/>
            <person name="Abe K."/>
            <person name="Kamihara K."/>
            <person name="Katsuta N."/>
            <person name="Sato K."/>
            <person name="Tanikawa M."/>
            <person name="Yamazaki M."/>
            <person name="Ninomiya K."/>
            <person name="Ishibashi T."/>
            <person name="Yamashita H."/>
            <person name="Murakawa K."/>
            <person name="Fujimori K."/>
            <person name="Tanai H."/>
            <person name="Kimata M."/>
            <person name="Watanabe M."/>
            <person name="Hiraoka S."/>
            <person name="Chiba Y."/>
            <person name="Ishida S."/>
            <person name="Ono Y."/>
            <person name="Takiguchi S."/>
            <person name="Watanabe S."/>
            <person name="Yosida M."/>
            <person name="Hotuta T."/>
            <person name="Kusano J."/>
            <person name="Kanehori K."/>
            <person name="Takahashi-Fujii A."/>
            <person name="Hara H."/>
            <person name="Tanase T.-O."/>
            <person name="Nomura Y."/>
            <person name="Togiya S."/>
            <person name="Komai F."/>
            <person name="Hara R."/>
            <person name="Takeuchi K."/>
            <person name="Arita M."/>
            <person name="Imose N."/>
            <person name="Musashino K."/>
            <person name="Yuuki H."/>
            <person name="Oshima A."/>
            <person name="Sasaki N."/>
            <person name="Aotsuka S."/>
            <person name="Yoshikawa Y."/>
            <person name="Matsunawa H."/>
            <person name="Ichihara T."/>
            <person name="Shiohata N."/>
            <person name="Sano S."/>
            <person name="Moriya S."/>
            <person name="Momiyama H."/>
            <person name="Satoh N."/>
            <person name="Takami S."/>
            <person name="Terashima Y."/>
            <person name="Suzuki O."/>
            <person name="Nakagawa S."/>
            <person name="Senoh A."/>
            <person name="Mizoguchi H."/>
            <person name="Goto Y."/>
            <person name="Shimizu F."/>
            <person name="Wakebe H."/>
            <person name="Hishigaki H."/>
            <person name="Watanabe T."/>
            <person name="Sugiyama A."/>
            <person name="Takemoto M."/>
            <person name="Kawakami B."/>
            <person name="Yamazaki M."/>
            <person name="Watanabe K."/>
            <person name="Kumagai A."/>
            <person name="Itakura S."/>
            <person name="Fukuzumi Y."/>
            <person name="Fujimori Y."/>
            <person name="Komiyama M."/>
            <person name="Tashiro H."/>
            <person name="Tanigami A."/>
            <person name="Fujiwara T."/>
            <person name="Ono T."/>
            <person name="Yamada K."/>
            <person name="Fujii Y."/>
            <person name="Ozaki K."/>
            <person name="Hirao M."/>
            <person name="Ohmori Y."/>
            <person name="Kawabata A."/>
            <person name="Hikiji T."/>
            <person name="Kobatake N."/>
            <person name="Inagaki H."/>
            <person name="Ikema Y."/>
            <person name="Okamoto S."/>
            <person name="Okitani R."/>
            <person name="Kawakami T."/>
            <person name="Noguchi S."/>
            <person name="Itoh T."/>
            <person name="Shigeta K."/>
            <person name="Senba T."/>
            <person name="Matsumura K."/>
            <person name="Nakajima Y."/>
            <person name="Mizuno T."/>
            <person name="Morinaga M."/>
            <person name="Sasaki M."/>
            <person name="Togashi T."/>
            <person name="Oyama M."/>
            <person name="Hata H."/>
            <person name="Watanabe M."/>
            <person name="Komatsu T."/>
            <person name="Mizushima-Sugano J."/>
            <person name="Satoh T."/>
            <person name="Shirai Y."/>
            <person name="Takahashi Y."/>
            <person name="Nakagawa K."/>
            <person name="Okumura K."/>
            <person name="Nagase T."/>
            <person name="Nomura N."/>
            <person name="Kikuchi H."/>
            <person name="Masuho Y."/>
            <person name="Yamashita R."/>
            <person name="Nakai K."/>
            <person name="Yada T."/>
            <person name="Nakamura Y."/>
            <person name="Ohara O."/>
            <person name="Isogai T."/>
            <person name="Sugano S."/>
        </authorList>
    </citation>
    <scope>NUCLEOTIDE SEQUENCE [LARGE SCALE MRNA]</scope>
    <source>
        <tissue>Amygdala</tissue>
    </source>
</reference>
<reference key="7">
    <citation type="journal article" date="2007" name="BMC Genomics">
        <title>The full-ORF clone resource of the German cDNA consortium.</title>
        <authorList>
            <person name="Bechtel S."/>
            <person name="Rosenfelder H."/>
            <person name="Duda A."/>
            <person name="Schmidt C.P."/>
            <person name="Ernst U."/>
            <person name="Wellenreuther R."/>
            <person name="Mehrle A."/>
            <person name="Schuster C."/>
            <person name="Bahr A."/>
            <person name="Bloecker H."/>
            <person name="Heubner D."/>
            <person name="Hoerlein A."/>
            <person name="Michel G."/>
            <person name="Wedler H."/>
            <person name="Koehrer K."/>
            <person name="Ottenwaelder B."/>
            <person name="Poustka A."/>
            <person name="Wiemann S."/>
            <person name="Schupp I."/>
        </authorList>
    </citation>
    <scope>NUCLEOTIDE SEQUENCE [LARGE SCALE MRNA]</scope>
    <source>
        <tissue>Skeletal muscle</tissue>
    </source>
</reference>
<reference key="8">
    <citation type="journal article" date="2003" name="Nature">
        <title>The DNA sequence and analysis of human chromosome 14.</title>
        <authorList>
            <person name="Heilig R."/>
            <person name="Eckenberg R."/>
            <person name="Petit J.-L."/>
            <person name="Fonknechten N."/>
            <person name="Da Silva C."/>
            <person name="Cattolico L."/>
            <person name="Levy M."/>
            <person name="Barbe V."/>
            <person name="De Berardinis V."/>
            <person name="Ureta-Vidal A."/>
            <person name="Pelletier E."/>
            <person name="Vico V."/>
            <person name="Anthouard V."/>
            <person name="Rowen L."/>
            <person name="Madan A."/>
            <person name="Qin S."/>
            <person name="Sun H."/>
            <person name="Du H."/>
            <person name="Pepin K."/>
            <person name="Artiguenave F."/>
            <person name="Robert C."/>
            <person name="Cruaud C."/>
            <person name="Bruels T."/>
            <person name="Jaillon O."/>
            <person name="Friedlander L."/>
            <person name="Samson G."/>
            <person name="Brottier P."/>
            <person name="Cure S."/>
            <person name="Segurens B."/>
            <person name="Aniere F."/>
            <person name="Samain S."/>
            <person name="Crespeau H."/>
            <person name="Abbasi N."/>
            <person name="Aiach N."/>
            <person name="Boscus D."/>
            <person name="Dickhoff R."/>
            <person name="Dors M."/>
            <person name="Dubois I."/>
            <person name="Friedman C."/>
            <person name="Gouyvenoux M."/>
            <person name="James R."/>
            <person name="Madan A."/>
            <person name="Mairey-Estrada B."/>
            <person name="Mangenot S."/>
            <person name="Martins N."/>
            <person name="Menard M."/>
            <person name="Oztas S."/>
            <person name="Ratcliffe A."/>
            <person name="Shaffer T."/>
            <person name="Trask B."/>
            <person name="Vacherie B."/>
            <person name="Bellemere C."/>
            <person name="Belser C."/>
            <person name="Besnard-Gonnet M."/>
            <person name="Bartol-Mavel D."/>
            <person name="Boutard M."/>
            <person name="Briez-Silla S."/>
            <person name="Combette S."/>
            <person name="Dufosse-Laurent V."/>
            <person name="Ferron C."/>
            <person name="Lechaplais C."/>
            <person name="Louesse C."/>
            <person name="Muselet D."/>
            <person name="Magdelenat G."/>
            <person name="Pateau E."/>
            <person name="Petit E."/>
            <person name="Sirvain-Trukniewicz P."/>
            <person name="Trybou A."/>
            <person name="Vega-Czarny N."/>
            <person name="Bataille E."/>
            <person name="Bluet E."/>
            <person name="Bordelais I."/>
            <person name="Dubois M."/>
            <person name="Dumont C."/>
            <person name="Guerin T."/>
            <person name="Haffray S."/>
            <person name="Hammadi R."/>
            <person name="Muanga J."/>
            <person name="Pellouin V."/>
            <person name="Robert D."/>
            <person name="Wunderle E."/>
            <person name="Gauguet G."/>
            <person name="Roy A."/>
            <person name="Sainte-Marthe L."/>
            <person name="Verdier J."/>
            <person name="Verdier-Discala C."/>
            <person name="Hillier L.W."/>
            <person name="Fulton L."/>
            <person name="McPherson J."/>
            <person name="Matsuda F."/>
            <person name="Wilson R."/>
            <person name="Scarpelli C."/>
            <person name="Gyapay G."/>
            <person name="Wincker P."/>
            <person name="Saurin W."/>
            <person name="Quetier F."/>
            <person name="Waterston R."/>
            <person name="Hood L."/>
            <person name="Weissenbach J."/>
        </authorList>
    </citation>
    <scope>NUCLEOTIDE SEQUENCE [LARGE SCALE GENOMIC DNA]</scope>
</reference>
<reference key="9">
    <citation type="submission" date="2005-07" db="EMBL/GenBank/DDBJ databases">
        <authorList>
            <person name="Mural R.J."/>
            <person name="Istrail S."/>
            <person name="Sutton G.G."/>
            <person name="Florea L."/>
            <person name="Halpern A.L."/>
            <person name="Mobarry C.M."/>
            <person name="Lippert R."/>
            <person name="Walenz B."/>
            <person name="Shatkay H."/>
            <person name="Dew I."/>
            <person name="Miller J.R."/>
            <person name="Flanigan M.J."/>
            <person name="Edwards N.J."/>
            <person name="Bolanos R."/>
            <person name="Fasulo D."/>
            <person name="Halldorsson B.V."/>
            <person name="Hannenhalli S."/>
            <person name="Turner R."/>
            <person name="Yooseph S."/>
            <person name="Lu F."/>
            <person name="Nusskern D.R."/>
            <person name="Shue B.C."/>
            <person name="Zheng X.H."/>
            <person name="Zhong F."/>
            <person name="Delcher A.L."/>
            <person name="Huson D.H."/>
            <person name="Kravitz S.A."/>
            <person name="Mouchard L."/>
            <person name="Reinert K."/>
            <person name="Remington K.A."/>
            <person name="Clark A.G."/>
            <person name="Waterman M.S."/>
            <person name="Eichler E.E."/>
            <person name="Adams M.D."/>
            <person name="Hunkapiller M.W."/>
            <person name="Myers E.W."/>
            <person name="Venter J.C."/>
        </authorList>
    </citation>
    <scope>NUCLEOTIDE SEQUENCE [LARGE SCALE GENOMIC DNA]</scope>
</reference>
<reference key="10">
    <citation type="journal article" date="2004" name="Genome Res.">
        <title>The status, quality, and expansion of the NIH full-length cDNA project: the Mammalian Gene Collection (MGC).</title>
        <authorList>
            <consortium name="The MGC Project Team"/>
        </authorList>
    </citation>
    <scope>NUCLEOTIDE SEQUENCE [LARGE SCALE MRNA]</scope>
    <source>
        <tissue>Colon</tissue>
    </source>
</reference>
<reference key="11">
    <citation type="journal article" date="2009" name="Proc. Natl. Acad. Sci. U.S.A.">
        <title>Global profiling of protease cleavage sites by chemoselective labeling of protein N-termini.</title>
        <authorList>
            <person name="Xu G."/>
            <person name="Shin S.B."/>
            <person name="Jaffrey S.R."/>
        </authorList>
    </citation>
    <scope>PROTEIN SEQUENCE [LARGE SCALE ANALYSIS] OF 32-42</scope>
    <source>
        <tissue>Leukemic T-cell</tissue>
    </source>
</reference>
<reference key="12">
    <citation type="journal article" date="1997" name="J. Cell Biol.">
        <title>Involvement of the transmembrane protein p23 in biosynthetic protein transport.</title>
        <authorList>
            <person name="Rojo M."/>
            <person name="Pepperkok R."/>
            <person name="Emery G."/>
            <person name="Kellner R."/>
            <person name="Stang E."/>
            <person name="Parton R.G."/>
            <person name="Gruenberg J."/>
        </authorList>
    </citation>
    <scope>SUBCELLULAR LOCATION</scope>
</reference>
<reference key="13">
    <citation type="journal article" date="1998" name="J. Cell Biol.">
        <title>gp25L/emp24/p24 protein family members of the cis-Golgi network bind both COP I and II coatomer.</title>
        <authorList>
            <person name="Dominguez M."/>
            <person name="Dejgaard K."/>
            <person name="Fullekrug J."/>
            <person name="Dahan S."/>
            <person name="Fazel A."/>
            <person name="Paccaud J.P."/>
            <person name="Thomas D.Y."/>
            <person name="Bergeron J.J."/>
            <person name="Nilsson T."/>
        </authorList>
    </citation>
    <scope>SUBCELLULAR LOCATION</scope>
    <scope>ASSOCIATION WITH COPI AND COPII VESICLE COAT</scope>
    <scope>MUTAGENESIS OF 211-PHE-PHE-212 AND 215-LYS-LYS-216</scope>
</reference>
<reference key="14">
    <citation type="journal article" date="1999" name="Cell">
        <title>Coupling of coat assembly and vesicle budding to packaging of putative cargo receptors.</title>
        <authorList>
            <person name="Bremser M."/>
            <person name="Nickel W."/>
            <person name="Schweikert M."/>
            <person name="Ravazzola M."/>
            <person name="Amherdt M."/>
            <person name="Hughes C.A."/>
            <person name="Sollner T.H."/>
            <person name="Rothman J.E."/>
            <person name="Wieland F.T."/>
        </authorList>
    </citation>
    <scope>FUNCTION</scope>
</reference>
<reference key="15">
    <citation type="journal article" date="1999" name="Mol. Biol. Cell">
        <title>Localization and recycling of gp27 (hp24gamma3): complex formation with other p24 family members.</title>
        <authorList>
            <person name="Fullekrug J."/>
            <person name="Suganuma T."/>
            <person name="Tang B.L."/>
            <person name="Hong W."/>
            <person name="Storrie B."/>
            <person name="Nilsson T."/>
        </authorList>
    </citation>
    <scope>SUBUNIT</scope>
</reference>
<reference key="16">
    <citation type="journal article" date="2000" name="Cell">
        <title>Decoding of sorting signals by coatomer through a GTPase switch in the COPI coat complex.</title>
        <authorList>
            <person name="Goldberg J."/>
        </authorList>
    </citation>
    <scope>MUTAGENESIS OF 211-PHE-PHE-212 AND 215-LYS-LYS-216</scope>
</reference>
<reference key="17">
    <citation type="journal article" date="2000" name="J. Biochem.">
        <title>Identification and characterization of novel isoforms of COP I subunits.</title>
        <authorList>
            <person name="Futatsumori M."/>
            <person name="Kasai K."/>
            <person name="Takatsu H."/>
            <person name="Shin H.-W."/>
            <person name="Nakayama K."/>
        </authorList>
    </citation>
    <scope>INTERACTION WITH COPG1</scope>
    <scope>MUTAGENESIS OF 211-PHE-PHE-212 AND 215-LYS-LYS-216</scope>
</reference>
<reference key="18">
    <citation type="journal article" date="2000" name="J. Cell Sci.">
        <title>Coupled transport of p24 family members.</title>
        <authorList>
            <person name="Emery G."/>
            <person name="Rojo M."/>
            <person name="Gruenberg J."/>
        </authorList>
    </citation>
    <scope>FUNCTION</scope>
    <scope>SUBUNIT</scope>
    <scope>SUBCELLULAR LOCATION</scope>
    <scope>MISCELLANEOUS</scope>
</reference>
<reference key="19">
    <citation type="journal article" date="2001" name="EMBO J.">
        <title>Recruitment to Golgi membranes of ADP-ribosylation factor 1 is mediated by the cytoplasmic domain of p23.</title>
        <authorList>
            <person name="Gommel D.U."/>
            <person name="Memon A.R."/>
            <person name="Heiss A."/>
            <person name="Lottspeich F."/>
            <person name="Pfannstiel J."/>
            <person name="Lechner J."/>
            <person name="Reinhard C."/>
            <person name="Helms J.B."/>
            <person name="Nickel W."/>
            <person name="Wieland F.T."/>
        </authorList>
    </citation>
    <scope>FUNCTION</scope>
    <scope>INTERACTION WITH ARF1</scope>
</reference>
<reference key="20">
    <citation type="journal article" date="2002" name="J. Biol. Chem.">
        <title>Oligomeric state and stoichiometry of p24 proteins in the early secretory pathway.</title>
        <authorList>
            <person name="Jenne N."/>
            <person name="Frey K."/>
            <person name="Brugger B."/>
            <person name="Wieland F.T."/>
        </authorList>
    </citation>
    <scope>SUBCELLULAR LOCATION</scope>
    <scope>SUBUNIT</scope>
</reference>
<reference key="21">
    <citation type="journal article" date="2006" name="J. Proteome Res.">
        <title>Proteomic and bioinformatic characterization of the biogenesis and function of melanosomes.</title>
        <authorList>
            <person name="Chi A."/>
            <person name="Valencia J.C."/>
            <person name="Hu Z.-Z."/>
            <person name="Watabe H."/>
            <person name="Yamaguchi H."/>
            <person name="Mangini N.J."/>
            <person name="Huang H."/>
            <person name="Canfield V.A."/>
            <person name="Cheng K.C."/>
            <person name="Yang F."/>
            <person name="Abe R."/>
            <person name="Yamagishi S."/>
            <person name="Shabanowitz J."/>
            <person name="Hearing V.J."/>
            <person name="Wu C."/>
            <person name="Appella E."/>
            <person name="Hunt D.F."/>
        </authorList>
    </citation>
    <scope>SUBCELLULAR LOCATION [LARGE SCALE ANALYSIS]</scope>
    <source>
        <tissue>Melanoma</tissue>
    </source>
</reference>
<reference key="22">
    <citation type="journal article" date="2006" name="Mol. Cell. Biol.">
        <title>Coatomer, the coat protein of COPI transport vesicles, discriminates endoplasmic reticulum residents from p24 proteins.</title>
        <authorList>
            <person name="Bethune J."/>
            <person name="Kol M."/>
            <person name="Hoffmann J."/>
            <person name="Reckmann I."/>
            <person name="Brugger B."/>
            <person name="Wieland F."/>
        </authorList>
    </citation>
    <scope>INTERACTION WITH COPG1</scope>
</reference>
<reference key="23">
    <citation type="journal article" date="2006" name="Nature">
        <title>TMP21 is a presenilin complex component that modulates gamma-secretase but not epsilon-secretase activity.</title>
        <authorList>
            <person name="Chen F."/>
            <person name="Hasegawa H."/>
            <person name="Schmitt-Ulms G."/>
            <person name="Kawarai T."/>
            <person name="Bohm C."/>
            <person name="Katayama T."/>
            <person name="Gu Y."/>
            <person name="Sanjo N."/>
            <person name="Glista M."/>
            <person name="Rogaeva E."/>
            <person name="Wakutani Y."/>
            <person name="Pardossi-Piquard R."/>
            <person name="Ruan X."/>
            <person name="Tandon A."/>
            <person name="Checler F."/>
            <person name="Marambaud P."/>
            <person name="Hansen K."/>
            <person name="Westaway D."/>
            <person name="St George-Hyslop P."/>
            <person name="Fraser P."/>
        </authorList>
    </citation>
    <scope>FUNCTION</scope>
    <scope>SUBUNIT</scope>
</reference>
<reference key="24">
    <citation type="journal article" date="2007" name="Mol. Neurodegener.">
        <title>Dual roles of the transmembrane protein p23/TMP21 in the modulation of amyloid precursor protein metabolism.</title>
        <authorList>
            <person name="Vetrivel K.S."/>
            <person name="Gong P."/>
            <person name="Bowen J.W."/>
            <person name="Cheng H."/>
            <person name="Chen Y."/>
            <person name="Carter M."/>
            <person name="Nguyen P.D."/>
            <person name="Placanica L."/>
            <person name="Wieland F.T."/>
            <person name="Li Y.M."/>
            <person name="Kounnas M.Z."/>
            <person name="Thinakaran G."/>
        </authorList>
    </citation>
    <scope>FUNCTION</scope>
</reference>
<reference key="25">
    <citation type="journal article" date="2008" name="Mol. Biol. Cell">
        <title>The cargo receptors Surf4, endoplasmic reticulum-Golgi intermediate compartment (ERGIC)-53, and p25 are required to maintain the architecture of ERGIC and Golgi.</title>
        <authorList>
            <person name="Mitrovic S."/>
            <person name="Ben-Tekaya H."/>
            <person name="Koegler E."/>
            <person name="Gruenberg J."/>
            <person name="Hauri H.-P."/>
        </authorList>
    </citation>
    <scope>IDENTIFICATION IN A COMPLEX WITH SURF4 AND TMED2</scope>
</reference>
<reference key="26">
    <citation type="journal article" date="2009" name="Cell">
        <title>GPI glycan remodeling by PGAP5 regulates transport of GPI-anchored proteins from the ER to the Golgi.</title>
        <authorList>
            <person name="Fujita M."/>
            <person name="Maeda Y."/>
            <person name="Ra M."/>
            <person name="Yamaguchi Y."/>
            <person name="Taguchi R."/>
            <person name="Kinoshita T."/>
        </authorList>
    </citation>
    <scope>INTERACTION WITH MPPE1</scope>
</reference>
<reference key="27">
    <citation type="journal article" date="2009" name="Cell. Signal.">
        <title>Arf GAP2 is positively regulated by coatomer and cargo.</title>
        <authorList>
            <person name="Luo R."/>
            <person name="Ha V.L."/>
            <person name="Hayashi R."/>
            <person name="Randazzo P.A."/>
        </authorList>
    </citation>
    <scope>FUNCTION</scope>
</reference>
<reference key="28">
    <citation type="journal article" date="2010" name="J. Cell Sci.">
        <title>Selective export of human GPI-anchored proteins from the endoplasmic reticulum.</title>
        <authorList>
            <person name="Bonnon C."/>
            <person name="Wendeler M.W."/>
            <person name="Paccaud J.P."/>
            <person name="Hauri H.P."/>
        </authorList>
    </citation>
    <scope>FUNCTION</scope>
</reference>
<reference key="29">
    <citation type="journal article" date="2011" name="BMC Syst. Biol.">
        <title>Initial characterization of the human central proteome.</title>
        <authorList>
            <person name="Burkard T.R."/>
            <person name="Planyavsky M."/>
            <person name="Kaupe I."/>
            <person name="Breitwieser F.P."/>
            <person name="Buerckstuemmer T."/>
            <person name="Bennett K.L."/>
            <person name="Superti-Furga G."/>
            <person name="Colinge J."/>
        </authorList>
    </citation>
    <scope>IDENTIFICATION BY MASS SPECTROMETRY [LARGE SCALE ANALYSIS]</scope>
</reference>
<reference key="30">
    <citation type="journal article" date="2011" name="Biol. Cell">
        <title>Syntaxin 17 cycles between the ER and ERGIC and is required to maintain the architecture of ERGIC and Golgi.</title>
        <authorList>
            <person name="Muppirala M."/>
            <person name="Gupta V."/>
            <person name="Swarup G."/>
        </authorList>
    </citation>
    <scope>INTERACTION WITH STX17</scope>
</reference>
<reference key="31">
    <citation type="journal article" date="2011" name="J. Neurochem.">
        <title>Proteinase-activated receptors, nucleotide P2Y receptors, and mu-opioid receptor-1B are under the control of the type I transmembrane proteins p23 and p24A in post-Golgi trafficking.</title>
        <authorList>
            <person name="Luo W."/>
            <person name="Wang Y."/>
            <person name="Reiser G."/>
        </authorList>
    </citation>
    <scope>FUNCTION</scope>
    <scope>INTERACTION WITH F2RL1</scope>
    <scope>SUBCELLULAR LOCATION</scope>
</reference>
<reference key="32">
    <citation type="journal article" date="2014" name="J. Proteomics">
        <title>An enzyme assisted RP-RPLC approach for in-depth analysis of human liver phosphoproteome.</title>
        <authorList>
            <person name="Bian Y."/>
            <person name="Song C."/>
            <person name="Cheng K."/>
            <person name="Dong M."/>
            <person name="Wang F."/>
            <person name="Huang J."/>
            <person name="Sun D."/>
            <person name="Wang L."/>
            <person name="Ye M."/>
            <person name="Zou H."/>
        </authorList>
    </citation>
    <scope>IDENTIFICATION BY MASS SPECTROMETRY [LARGE SCALE ANALYSIS]</scope>
    <source>
        <tissue>Liver</tissue>
    </source>
</reference>
<reference key="33">
    <citation type="journal article" date="2015" name="Proteomics">
        <title>N-terminome analysis of the human mitochondrial proteome.</title>
        <authorList>
            <person name="Vaca Jacome A.S."/>
            <person name="Rabilloud T."/>
            <person name="Schaeffer-Reiss C."/>
            <person name="Rompais M."/>
            <person name="Ayoub D."/>
            <person name="Lane L."/>
            <person name="Bairoch A."/>
            <person name="Van Dorsselaer A."/>
            <person name="Carapito C."/>
        </authorList>
    </citation>
    <scope>CLEAVAGE OF SIGNAL PEPTIDE [LARGE SCALE ANALYSIS] AFTER ALA-31</scope>
    <scope>IDENTIFICATION BY MASS SPECTROMETRY [LARGE SCALE ANALYSIS]</scope>
</reference>
<reference key="34">
    <citation type="journal article" date="2016" name="J. Mol. Biol.">
        <title>3D structure and interaction of p24beta and p24delta golgi dynamics domains: implication for p24 complex formation and cargo transport.</title>
        <authorList>
            <person name="Nagae M."/>
            <person name="Hirata T."/>
            <person name="Morita-Matsumoto K."/>
            <person name="Theiler R."/>
            <person name="Fujita M."/>
            <person name="Kinoshita T."/>
            <person name="Yamaguchi Y."/>
        </authorList>
    </citation>
    <scope>FUNCTION</scope>
    <scope>SUBUNIT</scope>
    <scope>DOMAIN</scope>
</reference>
<reference key="35">
    <citation type="journal article" date="2019" name="Biol. Open">
        <title>RAB21 interacts with TMED10 and modulates its localization and abundance.</title>
        <authorList>
            <person name="Del Olmo T."/>
            <person name="Lacarriere-Keita C."/>
            <person name="Normandin C."/>
            <person name="Jean D."/>
            <person name="Boisvert F.M."/>
            <person name="Jean S."/>
        </authorList>
    </citation>
    <scope>INTERACTION WITH RAB21</scope>
</reference>
<reference key="36">
    <citation type="journal article" date="2020" name="Cell">
        <title>A Translocation Pathway for Vesicle-Mediated Unconventional Protein Secretion.</title>
        <authorList>
            <person name="Zhang M."/>
            <person name="Liu L."/>
            <person name="Lin X."/>
            <person name="Wang Y."/>
            <person name="Li Y."/>
            <person name="Guo Q."/>
            <person name="Li S."/>
            <person name="Sun Y."/>
            <person name="Tao X."/>
            <person name="Zhang D."/>
            <person name="Lv X."/>
            <person name="Zheng L."/>
            <person name="Ge L."/>
        </authorList>
    </citation>
    <scope>FUNCTION</scope>
    <scope>SUBCELLULAR LOCATION</scope>
    <scope>INTERACTION WITH IL1B</scope>
    <scope>REGION</scope>
</reference>
<evidence type="ECO:0000250" key="1">
    <source>
        <dbReference type="UniProtKB" id="Q28735"/>
    </source>
</evidence>
<evidence type="ECO:0000250" key="2">
    <source>
        <dbReference type="UniProtKB" id="Q63584"/>
    </source>
</evidence>
<evidence type="ECO:0000255" key="3"/>
<evidence type="ECO:0000255" key="4">
    <source>
        <dbReference type="PROSITE-ProRule" id="PRU00096"/>
    </source>
</evidence>
<evidence type="ECO:0000269" key="5">
    <source>
    </source>
</evidence>
<evidence type="ECO:0000269" key="6">
    <source>
    </source>
</evidence>
<evidence type="ECO:0000269" key="7">
    <source>
    </source>
</evidence>
<evidence type="ECO:0000269" key="8">
    <source>
    </source>
</evidence>
<evidence type="ECO:0000269" key="9">
    <source>
    </source>
</evidence>
<evidence type="ECO:0000269" key="10">
    <source>
    </source>
</evidence>
<evidence type="ECO:0000269" key="11">
    <source>
    </source>
</evidence>
<evidence type="ECO:0000269" key="12">
    <source>
    </source>
</evidence>
<evidence type="ECO:0000269" key="13">
    <source>
    </source>
</evidence>
<evidence type="ECO:0000269" key="14">
    <source>
    </source>
</evidence>
<evidence type="ECO:0000269" key="15">
    <source>
    </source>
</evidence>
<evidence type="ECO:0000269" key="16">
    <source>
    </source>
</evidence>
<evidence type="ECO:0000269" key="17">
    <source>
    </source>
</evidence>
<evidence type="ECO:0000269" key="18">
    <source>
    </source>
</evidence>
<evidence type="ECO:0000269" key="19">
    <source>
    </source>
</evidence>
<evidence type="ECO:0000269" key="20">
    <source>
    </source>
</evidence>
<evidence type="ECO:0000269" key="21">
    <source>
    </source>
</evidence>
<evidence type="ECO:0000269" key="22">
    <source>
    </source>
</evidence>
<evidence type="ECO:0000269" key="23">
    <source>
    </source>
</evidence>
<evidence type="ECO:0000269" key="24">
    <source>
    </source>
</evidence>
<evidence type="ECO:0000269" key="25">
    <source>
    </source>
</evidence>
<evidence type="ECO:0000269" key="26">
    <source>
    </source>
</evidence>
<evidence type="ECO:0000269" key="27">
    <source>
    </source>
</evidence>
<evidence type="ECO:0000303" key="28">
    <source>
    </source>
</evidence>
<evidence type="ECO:0000305" key="29"/>
<evidence type="ECO:0000312" key="30">
    <source>
        <dbReference type="HGNC" id="HGNC:16998"/>
    </source>
</evidence>
<evidence type="ECO:0007744" key="31">
    <source>
    </source>
</evidence>
<protein>
    <recommendedName>
        <fullName>Transmembrane emp24 domain-containing protein 10</fullName>
        <shortName>Protein TMED10</shortName>
    </recommendedName>
    <alternativeName>
        <fullName>21 kDa transmembrane-trafficking protein</fullName>
    </alternativeName>
    <alternativeName>
        <fullName>S31I125</fullName>
    </alternativeName>
    <alternativeName>
        <fullName>S31III125</fullName>
    </alternativeName>
    <alternativeName>
        <fullName>Tmp-21-I</fullName>
    </alternativeName>
    <alternativeName>
        <fullName>Transmembrane protein Tmp21</fullName>
    </alternativeName>
    <alternativeName>
        <fullName>p23</fullName>
    </alternativeName>
    <alternativeName>
        <fullName>p24 family protein delta-1</fullName>
        <shortName>p24delta1</shortName>
    </alternativeName>
    <alternativeName>
        <fullName>p24delta</fullName>
    </alternativeName>
</protein>
<feature type="signal peptide" evidence="19 31">
    <location>
        <begin position="1"/>
        <end position="31"/>
    </location>
</feature>
<feature type="chain" id="PRO_0000010399" description="Transmembrane emp24 domain-containing protein 10">
    <location>
        <begin position="32"/>
        <end position="219"/>
    </location>
</feature>
<feature type="topological domain" description="Lumenal" evidence="29">
    <location>
        <begin position="32"/>
        <end position="185"/>
    </location>
</feature>
<feature type="transmembrane region" description="Helical" evidence="3">
    <location>
        <begin position="186"/>
        <end position="206"/>
    </location>
</feature>
<feature type="topological domain" description="Cytoplasmic" evidence="29">
    <location>
        <begin position="207"/>
        <end position="219"/>
    </location>
</feature>
<feature type="domain" description="GOLD" evidence="4">
    <location>
        <begin position="41"/>
        <end position="193"/>
    </location>
</feature>
<feature type="region of interest" description="Required for interaction with STX17" evidence="22">
    <location>
        <begin position="1"/>
        <end position="142"/>
    </location>
</feature>
<feature type="region of interest" description="Required for TMED10 and TMED2 cis-Golgi network localization">
    <location>
        <begin position="147"/>
        <end position="178"/>
    </location>
</feature>
<feature type="region of interest" description="Interaction with COPG1">
    <location>
        <begin position="204"/>
        <end position="219"/>
    </location>
</feature>
<feature type="region of interest" description="Interaction with ARF1 and IL1B" evidence="10 25">
    <location>
        <begin position="207"/>
        <end position="219"/>
    </location>
</feature>
<feature type="short sequence motif" description="COPI vesicle coat-binding">
    <location>
        <begin position="211"/>
        <end position="219"/>
    </location>
</feature>
<feature type="short sequence motif" description="COPII vesicle coat-binding">
    <location>
        <begin position="211"/>
        <end position="212"/>
    </location>
</feature>
<feature type="modified residue" description="Dimethylated arginine" evidence="2">
    <location>
        <position position="171"/>
    </location>
</feature>
<feature type="modified residue" description="Dimethylated arginine" evidence="2">
    <location>
        <position position="176"/>
    </location>
</feature>
<feature type="glycosylation site" description="N-linked (GlcNAc...) asparagine" evidence="3">
    <location>
        <position position="179"/>
    </location>
</feature>
<feature type="sequence variant" id="VAR_012051" description="In dbSNP:rs4929.">
    <original>S</original>
    <variation>Y</variation>
    <location>
        <position position="64"/>
    </location>
</feature>
<feature type="sequence variant" id="VAR_049111" description="In dbSNP:rs17103066.">
    <original>R</original>
    <variation>G</variation>
    <location>
        <position position="152"/>
    </location>
</feature>
<feature type="mutagenesis site" description="Disrupts interaction with COPG1 and association with coatomer; when associated with 215-A-A-216." evidence="7 9 27">
    <original>FF</original>
    <variation>AA</variation>
    <location>
        <begin position="211"/>
        <end position="212"/>
    </location>
</feature>
<feature type="mutagenesis site" description="No decrease in binding to COPG1. Disrupts interaction with SEC23A." evidence="7 9 27">
    <original>FF</original>
    <variation>AA</variation>
    <location>
        <begin position="211"/>
        <end position="212"/>
    </location>
</feature>
<feature type="mutagenesis site" description="Disrupts interaction with COPG1 and association with coatomer; when associated with 211-A-A-212." evidence="7 9 27">
    <original>KK</original>
    <variation>AA</variation>
    <location>
        <begin position="215"/>
        <end position="216"/>
    </location>
</feature>
<feature type="mutagenesis site" description="Significant reduction in binding to COPG1." evidence="7 9 27">
    <original>KK</original>
    <variation>AA</variation>
    <location>
        <begin position="215"/>
        <end position="216"/>
    </location>
</feature>
<feature type="sequence conflict" description="In Ref. 7; CAD89913." evidence="29" ref="7">
    <original>K</original>
    <variation>R</variation>
    <location>
        <position position="75"/>
    </location>
</feature>
<gene>
    <name evidence="30" type="primary">TMED10</name>
    <name type="synonym">TMP21</name>
</gene>
<organism>
    <name type="scientific">Homo sapiens</name>
    <name type="common">Human</name>
    <dbReference type="NCBI Taxonomy" id="9606"/>
    <lineage>
        <taxon>Eukaryota</taxon>
        <taxon>Metazoa</taxon>
        <taxon>Chordata</taxon>
        <taxon>Craniata</taxon>
        <taxon>Vertebrata</taxon>
        <taxon>Euteleostomi</taxon>
        <taxon>Mammalia</taxon>
        <taxon>Eutheria</taxon>
        <taxon>Euarchontoglires</taxon>
        <taxon>Primates</taxon>
        <taxon>Haplorrhini</taxon>
        <taxon>Catarrhini</taxon>
        <taxon>Hominidae</taxon>
        <taxon>Homo</taxon>
    </lineage>
</organism>
<keyword id="KW-1003">Cell membrane</keyword>
<keyword id="KW-0968">Cytoplasmic vesicle</keyword>
<keyword id="KW-0903">Direct protein sequencing</keyword>
<keyword id="KW-0256">Endoplasmic reticulum</keyword>
<keyword id="KW-0931">ER-Golgi transport</keyword>
<keyword id="KW-0325">Glycoprotein</keyword>
<keyword id="KW-0333">Golgi apparatus</keyword>
<keyword id="KW-0472">Membrane</keyword>
<keyword id="KW-0488">Methylation</keyword>
<keyword id="KW-0653">Protein transport</keyword>
<keyword id="KW-1267">Proteomics identification</keyword>
<keyword id="KW-1185">Reference proteome</keyword>
<keyword id="KW-0732">Signal</keyword>
<keyword id="KW-0812">Transmembrane</keyword>
<keyword id="KW-1133">Transmembrane helix</keyword>
<keyword id="KW-0813">Transport</keyword>
<comment type="function">
    <text evidence="1 2 5 8 10 11 12 15 17 20 21 23 25 28">Cargo receptor involved in protein vesicular trafficking and quality control in the endoplasmic reticulum (ER) and Golgi (PubMed:10052452, PubMed:11726511, PubMed:16641999, PubMed:17288597, PubMed:19296914, PubMed:20427317, PubMed:21219331, PubMed:27569046). The p24 protein family is a group of transmembrane proteins that bind coat protein complex I/COPI and coat protein complex II/COPII involved in vesicular trafficking between the membranes (PubMed:10052452). Acts at the lumenal side for incorporation of secretory cargo molecules into transport vesicles and involved in vesicle coat formation at the cytoplasmic side (PubMed:20427317, PubMed:27569046). Mainly functions in the early secretory pathway and cycles between the ER, ER-Golgi intermediate compartment (ERGIC) and Golgi, mediating cargo transport through COPI and COPII-coated vesicles (PubMed:10052452, PubMed:10852829, PubMed:12237308). In COPII vesicle-mediated anterograde transport, involved in the transport of GPI-anchored proteins by acting together with TMED2 as their cargo receptor; the function specifically implies SEC24C and SEC24D of the COPII vesicle coat and lipid raft-like microdomains of the ER (PubMed:20427317, PubMed:27569046). Recognizes GPI anchors structural remodeled in the ER by the GPI inositol-deacylase/PGAP1 and the metallophosphoesterase MPPE1/PGAP5 (By similarity). In COPI vesicle-mediated retrograde transport, involved in the biogenesis of COPI vesicles and vesicle coat recruitment (PubMed:11726511). Involved in trafficking of amyloid beta A4 protein and soluble APP-beta release (independent from the modulation of gamma-secretase activity) (PubMed:17288597). Involved in the KDELR2-mediated retrograde transport of the toxin A subunit (CTX-A-K63)together with COPI and the COOH terminus of KDELR2 (By similarity). On Golgi membranes, acts as a primary receptor for ARF1-GDP, a GTP-binding protein involved in COPI-vesicle formation (PubMed:11726511). Increases coatomer-dependent GTPase-activating activity of ARFGAP2 which mediates the hydrolysis of ARF1-bound GTP and therefore modulates protein trafficking from the Golgi apparatus (PubMed:19296914). Involved in the exocytic trafficking of G protein-coupled receptors F2LR1/PAR2 (trypsin and tryspin-like enzyme receptor), OPRM1 (opioid receptor) and P2RY4 (UTD and UDP receptor) from the Golgi to the plasma membrane, thus contributing to receptor resensitization (PubMed:21219331). In addition to its cargo receptor activity, may also act as a protein channel after oligomerization, facilitating the post-translational entry of leaderless cytoplasmic cargo into the ERGIC (PubMed:32272059). Involved in the translocation into ERGIC, the vesicle entry and the secretion of leaderless cargos (lacking the secretion signal sequence), including the mature form of interleukin 1/IL-1 family members, the alpha-crystallin B chain HSPB5, the carbohydrate-binding proteins galectin-1/LGALS1 and galectin-3/LGALS3, the microtubule-associated protein Tau/MAPT, and the annexin A1/ANXA1; the translocation process is dependent on cargo protein unfolding and enhanced by chaperones HSP90AB1 and HSP90B1/GRP9 (PubMed:32272059). Could also associates with the presenilin-dependent gamma-secretase complex in order to regulate gamma-cleavages of the amyloid beta A4 protein to yield amyloid-beta 40/Abeta40 (PubMed:16641999).</text>
</comment>
<comment type="subunit">
    <text evidence="1 2 6 8 9 10 11 12 13 16 18 20 21 22 23 24 25 27">Predominantly dimeric and to a lesser extent monomeric in the ER (PubMed:12237308). Monomer and dimer in ERGIC and cis-Golgi network (PubMed:12237308). Forms homooligomer (via GOLD domain); the assembly is promoted by direct binding with leaderless cargos and may form a protein channel that facilitates cargo entry into the ERGIC (PubMed:32272059). Forms heterooligomeric complexes with other members of the p24 family such as TMED2, TMED7 and TMED9 (PubMed:10359607, PubMed:20427317, PubMed:32272059, PubMed:9472029). Interacts (via GOLD domain) with TMED2 (via GOLD domain); the complex is required for export of TMED10 from the ER to the cis-Golgi network; the complex is proposed to be involved in cis-Golgi network dynamics and / or biogenesis (PubMed:10852829, PubMed:27569046). Associates with the COPI vesicle coat subunits (coatomer) (PubMed:11056392, PubMed:16940185, PubMed:9472029). Tetramerization of the cytoplasmic domain at the Golgi membrane in vitro; the complex is proposed to interact with COPI coatomer and induce budding of the vesicles (By similarity). Interacts with COPG1; the interaction involves TMED10 homodimer (PubMed:16940185). Interacts with ARF1 (GDP-bound); the interaction probably involves a TMED10 oligomer (PubMed:11726511). Interacts with SEC23A, SEC24B, SEC24C and SEC24D components of the coat protein complex II/COPII, indicative of an association of TMED10 with the COPII vesicle coat (PubMed:9472029). Interacts with CD59 (PubMed:20427317). Interacts with MPPE1/PGAP5; the complex might recruit and sort GPI-anchored proteins to the ER-exit site, or the interaction might lead to recycling of PGAP5 between the ER and the Golgi (PubMed:19837036). Interacts with F2LR1/PAR2 (PubMed:21219331). Interacts with KDELR2/ERD2; the interaction is disrupted by KDELR2 ligand (By similarity). Found in a complex composed at least of SURF4, TMED2 and TMED10 (PubMed:18287528). Associates with the presenilin-dependent gamma-secretase complex (PubMed:16641999). Interacts with STX17; the interaction is direct (PubMed:21545355). Interacts with IL-1; the interaction is direct (PubMed:32272059). Interacts with RAB21 (active GTP-bound form); the interaction is indirect and regulates TMED10 abundance and localization at the Golgi (PubMed:31455601).</text>
</comment>
<comment type="interaction">
    <interactant intactId="EBI-998422">
        <id>P49755</id>
    </interactant>
    <interactant intactId="EBI-77613">
        <id>P05067</id>
        <label>APP</label>
    </interactant>
    <organismsDiffer>false</organismsDiffer>
    <experiments>3</experiments>
</comment>
<comment type="interaction">
    <interactant intactId="EBI-998422">
        <id>P49755</id>
    </interactant>
    <interactant intactId="EBI-1055254">
        <id>Q8WXH2</id>
        <label>JPH3</label>
    </interactant>
    <organismsDiffer>false</organismsDiffer>
    <experiments>3</experiments>
</comment>
<comment type="interaction">
    <interactant intactId="EBI-998422">
        <id>P49755</id>
    </interactant>
    <interactant intactId="EBI-998440">
        <id>Q92542</id>
        <label>NCSTN</label>
    </interactant>
    <organismsDiffer>false</organismsDiffer>
    <experiments>5</experiments>
</comment>
<comment type="interaction">
    <interactant intactId="EBI-998422">
        <id>P49755</id>
    </interactant>
    <interactant intactId="EBI-297277">
        <id>P49768</id>
        <label>PSEN1</label>
    </interactant>
    <organismsDiffer>false</organismsDiffer>
    <experiments>4</experiments>
</comment>
<comment type="interaction">
    <interactant intactId="EBI-998422">
        <id>P49755</id>
    </interactant>
    <interactant intactId="EBI-998468">
        <id>Q9NZ42</id>
        <label>PSENEN</label>
    </interactant>
    <organismsDiffer>false</organismsDiffer>
    <experiments>3</experiments>
</comment>
<comment type="interaction">
    <interactant intactId="EBI-998422">
        <id>P49755</id>
    </interactant>
    <interactant intactId="EBI-4409481">
        <id>P17706-1</id>
        <label>PTPN2</label>
    </interactant>
    <organismsDiffer>false</organismsDiffer>
    <experiments>5</experiments>
</comment>
<comment type="interaction">
    <interactant intactId="EBI-998422">
        <id>P49755</id>
    </interactant>
    <interactant intactId="EBI-998485">
        <id>Q15363</id>
        <label>TMED2</label>
    </interactant>
    <organismsDiffer>false</organismsDiffer>
    <experiments>11</experiments>
</comment>
<comment type="interaction">
    <interactant intactId="EBI-998422">
        <id>P49755</id>
    </interactant>
    <interactant intactId="EBI-10039292">
        <id>Q8XAL7</id>
        <label>nleF</label>
    </interactant>
    <organismsDiffer>true</organismsDiffer>
    <experiments>6</experiments>
</comment>
<comment type="subcellular location">
    <subcellularLocation>
        <location evidence="8 11 27">Endoplasmic reticulum membrane</location>
        <topology evidence="3">Single-pass type I membrane protein</topology>
    </subcellularLocation>
    <subcellularLocation>
        <location evidence="11 25 26">Endoplasmic reticulum-Golgi intermediate compartment membrane</location>
        <topology evidence="3">Single-pass type I membrane protein</topology>
    </subcellularLocation>
    <subcellularLocation>
        <location evidence="8 11 21 26 27">Golgi apparatus membrane</location>
        <topology evidence="3">Single-pass type I membrane protein</topology>
    </subcellularLocation>
    <subcellularLocation>
        <location evidence="26">Golgi apparatus</location>
        <location evidence="26">cis-Golgi network membrane</location>
        <topology evidence="3">Single-pass type I membrane protein</topology>
    </subcellularLocation>
    <subcellularLocation>
        <location evidence="2">Golgi apparatus</location>
        <location evidence="2">trans-Golgi network membrane</location>
        <topology evidence="3">Single-pass type I membrane protein</topology>
    </subcellularLocation>
    <subcellularLocation>
        <location evidence="29">Cytoplasmic vesicle</location>
        <location evidence="29">Secretory vesicle membrane</location>
        <topology evidence="3">Single-pass type I membrane protein</topology>
    </subcellularLocation>
    <subcellularLocation>
        <location evidence="2">Cell membrane</location>
        <topology evidence="3">Single-pass type I membrane protein</topology>
    </subcellularLocation>
    <subcellularLocation>
        <location evidence="14">Melanosome</location>
    </subcellularLocation>
    <text evidence="14">Identified by mass spectrometry in melanosome fractions from stage I to stage IV.</text>
</comment>
<comment type="domain">
    <text evidence="23">The GOLD domain is required for proper p24 heterooligomeric complex formation and efficient transport of GPI-anchored proteins.</text>
</comment>
<comment type="domain">
    <text evidence="2">The lumenal domain mediates localization to the plasma membrane by partially overriding the ER retention by the cytoplasmic domain.</text>
</comment>
<comment type="miscellaneous">
    <text evidence="8">Ectopic expression of TMED10 alone does not result in its proper cis-Golgi network localization (PubMed:10852829). Interaction of TMED10 with TMED2 is both necessary and sufficient for transport of the couple to the cis-Golgi network, and TMED3 and/or TMED9 contribute to facilitating the process (PubMed:10852829).</text>
</comment>
<comment type="similarity">
    <text evidence="29">Belongs to the EMP24/GP25L family.</text>
</comment>
<comment type="sequence caution" evidence="29">
    <conflict type="frameshift">
        <sequence resource="EMBL-CDS" id="AAC42003"/>
    </conflict>
</comment>
<comment type="sequence caution" evidence="29">
    <conflict type="erroneous initiation">
        <sequence resource="EMBL-CDS" id="CAD66561"/>
    </conflict>
    <text>Extended N-terminus.</text>
</comment>
<proteinExistence type="evidence at protein level"/>
<sequence length="219" mass="24976">MSGLSGPPARRGPFPLALLLLFLLGPRLVLAISFHLPINSRKCLREEIHKDLLVTGAYEISDQSGGAGGLRSHLKITDSAGHILYSKEDATKGKFAFTTEDYDMFEVCFESKGTGRIPDQLVILDMKHGVEAKNYEEIAKVEKLKPLEVELRRLEDLSESIVNDFAYMKKREEEMRDTNESTNTRVLYFSIFSMFCLIGLATWQVFYLRRFFKAKKLIE</sequence>
<dbReference type="EMBL" id="X97442">
    <property type="protein sequence ID" value="CAA66071.1"/>
    <property type="molecule type" value="mRNA"/>
</dbReference>
<dbReference type="EMBL" id="X97444">
    <property type="protein sequence ID" value="CAA66073.1"/>
    <property type="molecule type" value="mRNA"/>
</dbReference>
<dbReference type="EMBL" id="U61734">
    <property type="protein sequence ID" value="AAB03625.1"/>
    <property type="molecule type" value="Genomic_DNA"/>
</dbReference>
<dbReference type="EMBL" id="L40397">
    <property type="protein sequence ID" value="AAC42003.1"/>
    <property type="status" value="ALT_FRAME"/>
    <property type="molecule type" value="mRNA"/>
</dbReference>
<dbReference type="EMBL" id="AJ004913">
    <property type="protein sequence ID" value="CAA06213.1"/>
    <property type="molecule type" value="mRNA"/>
</dbReference>
<dbReference type="EMBL" id="BX248754">
    <property type="protein sequence ID" value="CAD66561.1"/>
    <property type="status" value="ALT_INIT"/>
    <property type="molecule type" value="mRNA"/>
</dbReference>
<dbReference type="EMBL" id="AK312384">
    <property type="protein sequence ID" value="BAG35302.1"/>
    <property type="molecule type" value="mRNA"/>
</dbReference>
<dbReference type="EMBL" id="AL832012">
    <property type="protein sequence ID" value="CAD89913.1"/>
    <property type="molecule type" value="mRNA"/>
</dbReference>
<dbReference type="EMBL" id="AC007055">
    <property type="protein sequence ID" value="AAD31941.1"/>
    <property type="molecule type" value="Genomic_DNA"/>
</dbReference>
<dbReference type="EMBL" id="CH471061">
    <property type="protein sequence ID" value="EAW81223.1"/>
    <property type="molecule type" value="Genomic_DNA"/>
</dbReference>
<dbReference type="EMBL" id="BC001496">
    <property type="protein sequence ID" value="AAH01496.1"/>
    <property type="molecule type" value="mRNA"/>
</dbReference>
<dbReference type="EMBL" id="BC001825">
    <property type="protein sequence ID" value="AAH01825.1"/>
    <property type="molecule type" value="mRNA"/>
</dbReference>
<dbReference type="CCDS" id="CCDS9840.1"/>
<dbReference type="PIR" id="G01159">
    <property type="entry name" value="G01159"/>
</dbReference>
<dbReference type="RefSeq" id="NP_006818.3">
    <property type="nucleotide sequence ID" value="NM_006827.5"/>
</dbReference>
<dbReference type="SMR" id="P49755"/>
<dbReference type="BioGRID" id="116169">
    <property type="interactions" value="275"/>
</dbReference>
<dbReference type="CORUM" id="P49755"/>
<dbReference type="ELM" id="P49755"/>
<dbReference type="FunCoup" id="P49755">
    <property type="interactions" value="2905"/>
</dbReference>
<dbReference type="IntAct" id="P49755">
    <property type="interactions" value="191"/>
</dbReference>
<dbReference type="MINT" id="P49755"/>
<dbReference type="STRING" id="9606.ENSP00000303145"/>
<dbReference type="ChEMBL" id="CHEMBL4295772"/>
<dbReference type="TCDB" id="9.B.188.1.4">
    <property type="family name" value="the transmembrane emp24 domain-containing protein (tmed) family"/>
</dbReference>
<dbReference type="GlyCosmos" id="P49755">
    <property type="glycosylation" value="2 sites, 1 glycan"/>
</dbReference>
<dbReference type="GlyGen" id="P49755">
    <property type="glycosylation" value="6 sites, 3 O-linked glycans (5 sites)"/>
</dbReference>
<dbReference type="iPTMnet" id="P49755"/>
<dbReference type="MetOSite" id="P49755"/>
<dbReference type="PhosphoSitePlus" id="P49755"/>
<dbReference type="SwissPalm" id="P49755"/>
<dbReference type="BioMuta" id="TMED10"/>
<dbReference type="DMDM" id="3915893"/>
<dbReference type="jPOST" id="P49755"/>
<dbReference type="MassIVE" id="P49755"/>
<dbReference type="PaxDb" id="9606-ENSP00000303145"/>
<dbReference type="PeptideAtlas" id="P49755"/>
<dbReference type="PRIDE" id="P49755"/>
<dbReference type="ProteomicsDB" id="56070"/>
<dbReference type="Pumba" id="P49755"/>
<dbReference type="TopDownProteomics" id="P49755"/>
<dbReference type="Antibodypedia" id="25817">
    <property type="antibodies" value="441 antibodies from 34 providers"/>
</dbReference>
<dbReference type="DNASU" id="10972"/>
<dbReference type="Ensembl" id="ENST00000303575.9">
    <property type="protein sequence ID" value="ENSP00000303145.4"/>
    <property type="gene ID" value="ENSG00000170348.9"/>
</dbReference>
<dbReference type="GeneID" id="10972"/>
<dbReference type="KEGG" id="hsa:10972"/>
<dbReference type="MANE-Select" id="ENST00000303575.9">
    <property type="protein sequence ID" value="ENSP00000303145.4"/>
    <property type="RefSeq nucleotide sequence ID" value="NM_006827.6"/>
    <property type="RefSeq protein sequence ID" value="NP_006818.3"/>
</dbReference>
<dbReference type="UCSC" id="uc001xrm.2">
    <property type="organism name" value="human"/>
</dbReference>
<dbReference type="AGR" id="HGNC:16998"/>
<dbReference type="CTD" id="10972"/>
<dbReference type="DisGeNET" id="10972"/>
<dbReference type="GeneCards" id="TMED10"/>
<dbReference type="HGNC" id="HGNC:16998">
    <property type="gene designation" value="TMED10"/>
</dbReference>
<dbReference type="HPA" id="ENSG00000170348">
    <property type="expression patterns" value="Low tissue specificity"/>
</dbReference>
<dbReference type="MIM" id="605406">
    <property type="type" value="gene"/>
</dbReference>
<dbReference type="neXtProt" id="NX_P49755"/>
<dbReference type="OpenTargets" id="ENSG00000170348"/>
<dbReference type="PharmGKB" id="PA128394579"/>
<dbReference type="VEuPathDB" id="HostDB:ENSG00000170348"/>
<dbReference type="eggNOG" id="KOG1691">
    <property type="taxonomic scope" value="Eukaryota"/>
</dbReference>
<dbReference type="GeneTree" id="ENSGT00550000074954"/>
<dbReference type="HOGENOM" id="CLU_066963_3_1_1"/>
<dbReference type="InParanoid" id="P49755"/>
<dbReference type="OMA" id="DVFEACF"/>
<dbReference type="OrthoDB" id="759142at2759"/>
<dbReference type="PAN-GO" id="P49755">
    <property type="GO annotations" value="8 GO annotations based on evolutionary models"/>
</dbReference>
<dbReference type="PhylomeDB" id="P49755"/>
<dbReference type="TreeFam" id="TF313729"/>
<dbReference type="PathwayCommons" id="P49755"/>
<dbReference type="Reactome" id="R-HSA-204005">
    <property type="pathway name" value="COPII-mediated vesicle transport"/>
</dbReference>
<dbReference type="Reactome" id="R-HSA-5694530">
    <property type="pathway name" value="Cargo concentration in the ER"/>
</dbReference>
<dbReference type="Reactome" id="R-HSA-6807878">
    <property type="pathway name" value="COPI-mediated anterograde transport"/>
</dbReference>
<dbReference type="Reactome" id="R-HSA-6811434">
    <property type="pathway name" value="COPI-dependent Golgi-to-ER retrograde traffic"/>
</dbReference>
<dbReference type="SignaLink" id="P49755"/>
<dbReference type="SIGNOR" id="P49755"/>
<dbReference type="BioGRID-ORCS" id="10972">
    <property type="hits" value="365 hits in 1170 CRISPR screens"/>
</dbReference>
<dbReference type="ChiTaRS" id="TMED10">
    <property type="organism name" value="human"/>
</dbReference>
<dbReference type="GeneWiki" id="TMED10"/>
<dbReference type="GenomeRNAi" id="10972"/>
<dbReference type="Pharos" id="P49755">
    <property type="development level" value="Tbio"/>
</dbReference>
<dbReference type="PRO" id="PR:P49755"/>
<dbReference type="Proteomes" id="UP000005640">
    <property type="component" value="Chromosome 14"/>
</dbReference>
<dbReference type="RNAct" id="P49755">
    <property type="molecule type" value="protein"/>
</dbReference>
<dbReference type="Bgee" id="ENSG00000170348">
    <property type="expression patterns" value="Expressed in parotid gland and 208 other cell types or tissues"/>
</dbReference>
<dbReference type="ExpressionAtlas" id="P49755">
    <property type="expression patterns" value="baseline and differential"/>
</dbReference>
<dbReference type="GO" id="GO:0005801">
    <property type="term" value="C:cis-Golgi network"/>
    <property type="evidence" value="ECO:0000250"/>
    <property type="project" value="HGNC-UCL"/>
</dbReference>
<dbReference type="GO" id="GO:0030137">
    <property type="term" value="C:COPI-coated vesicle"/>
    <property type="evidence" value="ECO:0000250"/>
    <property type="project" value="UniProtKB"/>
</dbReference>
<dbReference type="GO" id="GO:0030134">
    <property type="term" value="C:COPII-coated ER to Golgi transport vesicle"/>
    <property type="evidence" value="ECO:0000318"/>
    <property type="project" value="GO_Central"/>
</dbReference>
<dbReference type="GO" id="GO:0005783">
    <property type="term" value="C:endoplasmic reticulum"/>
    <property type="evidence" value="ECO:0000314"/>
    <property type="project" value="UniProtKB"/>
</dbReference>
<dbReference type="GO" id="GO:0005789">
    <property type="term" value="C:endoplasmic reticulum membrane"/>
    <property type="evidence" value="ECO:0000304"/>
    <property type="project" value="Reactome"/>
</dbReference>
<dbReference type="GO" id="GO:0005793">
    <property type="term" value="C:endoplasmic reticulum-Golgi intermediate compartment"/>
    <property type="evidence" value="ECO:0000314"/>
    <property type="project" value="UniProtKB"/>
</dbReference>
<dbReference type="GO" id="GO:0033116">
    <property type="term" value="C:endoplasmic reticulum-Golgi intermediate compartment membrane"/>
    <property type="evidence" value="ECO:0000304"/>
    <property type="project" value="Reactome"/>
</dbReference>
<dbReference type="GO" id="GO:0012507">
    <property type="term" value="C:ER to Golgi transport vesicle membrane"/>
    <property type="evidence" value="ECO:0000304"/>
    <property type="project" value="Reactome"/>
</dbReference>
<dbReference type="GO" id="GO:0070765">
    <property type="term" value="C:gamma-secretase complex"/>
    <property type="evidence" value="ECO:0000314"/>
    <property type="project" value="UniProtKB"/>
</dbReference>
<dbReference type="GO" id="GO:0005794">
    <property type="term" value="C:Golgi apparatus"/>
    <property type="evidence" value="ECO:0000314"/>
    <property type="project" value="UniProtKB"/>
</dbReference>
<dbReference type="GO" id="GO:0000139">
    <property type="term" value="C:Golgi membrane"/>
    <property type="evidence" value="ECO:0000304"/>
    <property type="project" value="Reactome"/>
</dbReference>
<dbReference type="GO" id="GO:0042470">
    <property type="term" value="C:melanosome"/>
    <property type="evidence" value="ECO:0007669"/>
    <property type="project" value="UniProtKB-SubCell"/>
</dbReference>
<dbReference type="GO" id="GO:0016020">
    <property type="term" value="C:membrane"/>
    <property type="evidence" value="ECO:0000250"/>
    <property type="project" value="HGNC-UCL"/>
</dbReference>
<dbReference type="GO" id="GO:0005886">
    <property type="term" value="C:plasma membrane"/>
    <property type="evidence" value="ECO:0000250"/>
    <property type="project" value="UniProtKB"/>
</dbReference>
<dbReference type="GO" id="GO:0030667">
    <property type="term" value="C:secretory granule membrane"/>
    <property type="evidence" value="ECO:0000250"/>
    <property type="project" value="UniProtKB"/>
</dbReference>
<dbReference type="GO" id="GO:0030140">
    <property type="term" value="C:trans-Golgi network transport vesicle"/>
    <property type="evidence" value="ECO:0000250"/>
    <property type="project" value="UniProtKB"/>
</dbReference>
<dbReference type="GO" id="GO:0030133">
    <property type="term" value="C:transport vesicle"/>
    <property type="evidence" value="ECO:0000304"/>
    <property type="project" value="Reactome"/>
</dbReference>
<dbReference type="GO" id="GO:0042589">
    <property type="term" value="C:zymogen granule membrane"/>
    <property type="evidence" value="ECO:0000250"/>
    <property type="project" value="HGNC-UCL"/>
</dbReference>
<dbReference type="GO" id="GO:0008320">
    <property type="term" value="F:protein transmembrane transporter activity"/>
    <property type="evidence" value="ECO:0000315"/>
    <property type="project" value="UniProtKB"/>
</dbReference>
<dbReference type="GO" id="GO:0019905">
    <property type="term" value="F:syntaxin binding"/>
    <property type="evidence" value="ECO:0000353"/>
    <property type="project" value="UniProtKB"/>
</dbReference>
<dbReference type="GO" id="GO:0048205">
    <property type="term" value="P:COPI coating of Golgi vesicle"/>
    <property type="evidence" value="ECO:0000304"/>
    <property type="project" value="UniProtKB"/>
</dbReference>
<dbReference type="GO" id="GO:0035964">
    <property type="term" value="P:COPI-coated vesicle budding"/>
    <property type="evidence" value="ECO:0000314"/>
    <property type="project" value="UniProtKB"/>
</dbReference>
<dbReference type="GO" id="GO:0048208">
    <property type="term" value="P:COPII vesicle coating"/>
    <property type="evidence" value="ECO:0000304"/>
    <property type="project" value="UniProtKB"/>
</dbReference>
<dbReference type="GO" id="GO:0106273">
    <property type="term" value="P:cytosol to ERGIC protein transport"/>
    <property type="evidence" value="ECO:0000315"/>
    <property type="project" value="UniProtKB"/>
</dbReference>
<dbReference type="GO" id="GO:0006888">
    <property type="term" value="P:endoplasmic reticulum to Golgi vesicle-mediated transport"/>
    <property type="evidence" value="ECO:0000318"/>
    <property type="project" value="GO_Central"/>
</dbReference>
<dbReference type="GO" id="GO:0007030">
    <property type="term" value="P:Golgi organization"/>
    <property type="evidence" value="ECO:0000318"/>
    <property type="project" value="GO_Central"/>
</dbReference>
<dbReference type="GO" id="GO:0006886">
    <property type="term" value="P:intracellular protein transport"/>
    <property type="evidence" value="ECO:0000314"/>
    <property type="project" value="UniProtKB"/>
</dbReference>
<dbReference type="GO" id="GO:0032732">
    <property type="term" value="P:positive regulation of interleukin-1 production"/>
    <property type="evidence" value="ECO:0000315"/>
    <property type="project" value="UniProtKB"/>
</dbReference>
<dbReference type="GO" id="GO:0050714">
    <property type="term" value="P:positive regulation of protein secretion"/>
    <property type="evidence" value="ECO:0000315"/>
    <property type="project" value="UniProtKB"/>
</dbReference>
<dbReference type="GO" id="GO:0106272">
    <property type="term" value="P:protein localization to ERGIC"/>
    <property type="evidence" value="ECO:0000315"/>
    <property type="project" value="UniProtKB"/>
</dbReference>
<dbReference type="GO" id="GO:0045055">
    <property type="term" value="P:regulated exocytosis"/>
    <property type="evidence" value="ECO:0000250"/>
    <property type="project" value="HGNC-UCL"/>
</dbReference>
<dbReference type="GO" id="GO:1902003">
    <property type="term" value="P:regulation of amyloid-beta formation"/>
    <property type="evidence" value="ECO:0000315"/>
    <property type="project" value="UniProtKB"/>
</dbReference>
<dbReference type="GO" id="GO:0006890">
    <property type="term" value="P:retrograde vesicle-mediated transport, Golgi to endoplasmic reticulum"/>
    <property type="evidence" value="ECO:0000250"/>
    <property type="project" value="UniProtKB"/>
</dbReference>
<dbReference type="GO" id="GO:0035459">
    <property type="term" value="P:vesicle cargo loading"/>
    <property type="evidence" value="ECO:0000304"/>
    <property type="project" value="UniProtKB"/>
</dbReference>
<dbReference type="GO" id="GO:0048199">
    <property type="term" value="P:vesicle targeting, to, from or within Golgi"/>
    <property type="evidence" value="ECO:0000250"/>
    <property type="project" value="HGNC-UCL"/>
</dbReference>
<dbReference type="InterPro" id="IPR015720">
    <property type="entry name" value="Emp24-like"/>
</dbReference>
<dbReference type="InterPro" id="IPR009038">
    <property type="entry name" value="GOLD_dom"/>
</dbReference>
<dbReference type="PANTHER" id="PTHR22811">
    <property type="entry name" value="TRANSMEMBRANE EMP24 DOMAIN-CONTAINING PROTEIN"/>
    <property type="match status" value="1"/>
</dbReference>
<dbReference type="Pfam" id="PF01105">
    <property type="entry name" value="EMP24_GP25L"/>
    <property type="match status" value="1"/>
</dbReference>
<dbReference type="SMART" id="SM01190">
    <property type="entry name" value="EMP24_GP25L"/>
    <property type="match status" value="1"/>
</dbReference>
<dbReference type="PROSITE" id="PS50866">
    <property type="entry name" value="GOLD"/>
    <property type="match status" value="1"/>
</dbReference>
<accession>P49755</accession>
<accession>B2R605</accession>
<accession>Q15602</accession>
<accession>Q16536</accession>
<accession>Q86TC2</accession>
<accession>Q86TS5</accession>
<name>TMEDA_HUMAN</name>